<comment type="catalytic activity">
    <reaction>
        <text>ATP + H2O = ADP + phosphate + H(+)</text>
        <dbReference type="Rhea" id="RHEA:13065"/>
        <dbReference type="ChEBI" id="CHEBI:15377"/>
        <dbReference type="ChEBI" id="CHEBI:15378"/>
        <dbReference type="ChEBI" id="CHEBI:30616"/>
        <dbReference type="ChEBI" id="CHEBI:43474"/>
        <dbReference type="ChEBI" id="CHEBI:456216"/>
        <dbReference type="EC" id="3.6.4.13"/>
    </reaction>
</comment>
<comment type="subcellular location">
    <subcellularLocation>
        <location evidence="4">Nucleus</location>
        <location evidence="4">Nucleolus</location>
    </subcellularLocation>
</comment>
<comment type="similarity">
    <text evidence="5">Belongs to the DEAD box helicase family. DEAH subfamily.</text>
</comment>
<sequence>MGRLRKRFNEKGRQSGIQKMLNLKRARLHRSVREQESSSEVHANPEPDNQDSNAEILIDVPKEERQKRKQELKDQLLKENEGSISSKKKKRLDKYIENKLKKEEVASLIAKLAEERIDTSLLSSSKNLGKQATAKEKLKKSLLEEKLGLPLSDADSRLYKVVDVETTTTKSSTAETNAPEKYSTRSGFGFGFSTGTNESEITPNIKVLPPKKKKNASWGKMLNEDPEYDSAEEDYLSTDSEEFSEDSDNSSEENKDTNEPSTKDAEKTVPEDVVNLRSEQKLQPSFGHPEFENEDFDLETSEDDSSDDATERASRFKSWANKQILGADVGEKSHDVAPDNKIDNPDADMVRAQRMPRKLKMREEDVEPTADDIEIKGRKTTYTIINRPPEIQESRLALPIVAEEQRIMEQIFANDVVIICGATGSGKTTQLPQFLFEAGFSSPESENPGMIAITQPRRVAAVSIAKRVSEELTGFSSKVSYQIRFDSTINPDTAIKFMTDGILLRELSSDFLLTAYSAVIVDEAHERSVNTDILLGLLSRIVRLRREMSKSDQKVKPLKLIIMSATLRVTDFSENKLLFSVPPPIIKIDARQYPVSIHFNRTTKPDYLQDAFDKVCLIHKRLPAGSILVFLTGQQEVEQLCQMLRKRFVRSFRPLKSRARIVVSRKTMSVENEDLQSETEDIDQVPTSSSSSVTYDDESEPMYVLPLYSLLTTEDQMKVFDSSPEGHRMCIVATNVAETSITIPNIRYVVDCGKAKERVYNEKTSVQKFEVRWISKANADQRAGRAGRTGPGHCYRLYSSAVFDSSFPLHSLPEILRTPVESIVLQMKNMNIDNIANFPFPTSPGRSRLEKSLKLLSNLGAIDSEGVLTKLGEQMSLFPLSPRFSKMLIIGQQHGCLPYVIALVSALSINQLFVSKQSLLYDAHDKNSRSEETDLIDDDEIKQKEEYKNRMRGYFNAISRFQAIDPDAPALSLLSAVCAYDYASDKRKFCKENYLREKALEEVTNLRKQIIGLLKRYMVRVEKEFFKLQLKPPTSVQIKALRQFIASAYIDQVALYDKEKRGYVTLFPSGSEVVQFVPDRTYNIDSEYVVYLSLHESRSGRVYMSPLTEISPEHLARLAKNTTLLSYSKPLSYPPIRYLDNATKRECWVIPILSANIGTGSPSWNLPAVQIIQKRINGRWVNC</sequence>
<reference key="1">
    <citation type="journal article" date="2002" name="Nature">
        <title>The genome sequence of Schizosaccharomyces pombe.</title>
        <authorList>
            <person name="Wood V."/>
            <person name="Gwilliam R."/>
            <person name="Rajandream M.A."/>
            <person name="Lyne M.H."/>
            <person name="Lyne R."/>
            <person name="Stewart A."/>
            <person name="Sgouros J.G."/>
            <person name="Peat N."/>
            <person name="Hayles J."/>
            <person name="Baker S.G."/>
            <person name="Basham D."/>
            <person name="Bowman S."/>
            <person name="Brooks K."/>
            <person name="Brown D."/>
            <person name="Brown S."/>
            <person name="Chillingworth T."/>
            <person name="Churcher C.M."/>
            <person name="Collins M."/>
            <person name="Connor R."/>
            <person name="Cronin A."/>
            <person name="Davis P."/>
            <person name="Feltwell T."/>
            <person name="Fraser A."/>
            <person name="Gentles S."/>
            <person name="Goble A."/>
            <person name="Hamlin N."/>
            <person name="Harris D.E."/>
            <person name="Hidalgo J."/>
            <person name="Hodgson G."/>
            <person name="Holroyd S."/>
            <person name="Hornsby T."/>
            <person name="Howarth S."/>
            <person name="Huckle E.J."/>
            <person name="Hunt S."/>
            <person name="Jagels K."/>
            <person name="James K.D."/>
            <person name="Jones L."/>
            <person name="Jones M."/>
            <person name="Leather S."/>
            <person name="McDonald S."/>
            <person name="McLean J."/>
            <person name="Mooney P."/>
            <person name="Moule S."/>
            <person name="Mungall K.L."/>
            <person name="Murphy L.D."/>
            <person name="Niblett D."/>
            <person name="Odell C."/>
            <person name="Oliver K."/>
            <person name="O'Neil S."/>
            <person name="Pearson D."/>
            <person name="Quail M.A."/>
            <person name="Rabbinowitsch E."/>
            <person name="Rutherford K.M."/>
            <person name="Rutter S."/>
            <person name="Saunders D."/>
            <person name="Seeger K."/>
            <person name="Sharp S."/>
            <person name="Skelton J."/>
            <person name="Simmonds M.N."/>
            <person name="Squares R."/>
            <person name="Squares S."/>
            <person name="Stevens K."/>
            <person name="Taylor K."/>
            <person name="Taylor R.G."/>
            <person name="Tivey A."/>
            <person name="Walsh S.V."/>
            <person name="Warren T."/>
            <person name="Whitehead S."/>
            <person name="Woodward J.R."/>
            <person name="Volckaert G."/>
            <person name="Aert R."/>
            <person name="Robben J."/>
            <person name="Grymonprez B."/>
            <person name="Weltjens I."/>
            <person name="Vanstreels E."/>
            <person name="Rieger M."/>
            <person name="Schaefer M."/>
            <person name="Mueller-Auer S."/>
            <person name="Gabel C."/>
            <person name="Fuchs M."/>
            <person name="Duesterhoeft A."/>
            <person name="Fritzc C."/>
            <person name="Holzer E."/>
            <person name="Moestl D."/>
            <person name="Hilbert H."/>
            <person name="Borzym K."/>
            <person name="Langer I."/>
            <person name="Beck A."/>
            <person name="Lehrach H."/>
            <person name="Reinhardt R."/>
            <person name="Pohl T.M."/>
            <person name="Eger P."/>
            <person name="Zimmermann W."/>
            <person name="Wedler H."/>
            <person name="Wambutt R."/>
            <person name="Purnelle B."/>
            <person name="Goffeau A."/>
            <person name="Cadieu E."/>
            <person name="Dreano S."/>
            <person name="Gloux S."/>
            <person name="Lelaure V."/>
            <person name="Mottier S."/>
            <person name="Galibert F."/>
            <person name="Aves S.J."/>
            <person name="Xiang Z."/>
            <person name="Hunt C."/>
            <person name="Moore K."/>
            <person name="Hurst S.M."/>
            <person name="Lucas M."/>
            <person name="Rochet M."/>
            <person name="Gaillardin C."/>
            <person name="Tallada V.A."/>
            <person name="Garzon A."/>
            <person name="Thode G."/>
            <person name="Daga R.R."/>
            <person name="Cruzado L."/>
            <person name="Jimenez J."/>
            <person name="Sanchez M."/>
            <person name="del Rey F."/>
            <person name="Benito J."/>
            <person name="Dominguez A."/>
            <person name="Revuelta J.L."/>
            <person name="Moreno S."/>
            <person name="Armstrong J."/>
            <person name="Forsburg S.L."/>
            <person name="Cerutti L."/>
            <person name="Lowe T."/>
            <person name="McCombie W.R."/>
            <person name="Paulsen I."/>
            <person name="Potashkin J."/>
            <person name="Shpakovski G.V."/>
            <person name="Ussery D."/>
            <person name="Barrell B.G."/>
            <person name="Nurse P."/>
        </authorList>
    </citation>
    <scope>NUCLEOTIDE SEQUENCE [LARGE SCALE GENOMIC DNA]</scope>
    <source>
        <strain>972 / ATCC 24843</strain>
    </source>
</reference>
<reference key="2">
    <citation type="journal article" date="2000" name="Genes Cells">
        <title>Large-scale screening of intracellular protein localization in living fission yeast cells by the use of a GFP-fusion genomic DNA library.</title>
        <authorList>
            <person name="Ding D.-Q."/>
            <person name="Tomita Y."/>
            <person name="Yamamoto A."/>
            <person name="Chikashige Y."/>
            <person name="Haraguchi T."/>
            <person name="Hiraoka Y."/>
        </authorList>
    </citation>
    <scope>NUCLEOTIDE SEQUENCE [LARGE SCALE GENOMIC DNA] OF 582-780</scope>
    <scope>SUBCELLULAR LOCATION</scope>
    <source>
        <strain>ATCC 38364 / 968</strain>
    </source>
</reference>
<name>YK16_SCHPO</name>
<proteinExistence type="inferred from homology"/>
<accession>Q9HDY4</accession>
<accession>Q9UTZ3</accession>
<organism>
    <name type="scientific">Schizosaccharomyces pombe (strain 972 / ATCC 24843)</name>
    <name type="common">Fission yeast</name>
    <dbReference type="NCBI Taxonomy" id="284812"/>
    <lineage>
        <taxon>Eukaryota</taxon>
        <taxon>Fungi</taxon>
        <taxon>Dikarya</taxon>
        <taxon>Ascomycota</taxon>
        <taxon>Taphrinomycotina</taxon>
        <taxon>Schizosaccharomycetes</taxon>
        <taxon>Schizosaccharomycetales</taxon>
        <taxon>Schizosaccharomycetaceae</taxon>
        <taxon>Schizosaccharomyces</taxon>
    </lineage>
</organism>
<dbReference type="EC" id="3.6.4.13"/>
<dbReference type="EMBL" id="CU329670">
    <property type="protein sequence ID" value="CAC21479.1"/>
    <property type="molecule type" value="Genomic_DNA"/>
</dbReference>
<dbReference type="EMBL" id="AB027915">
    <property type="protein sequence ID" value="BAA87219.1"/>
    <property type="molecule type" value="Genomic_DNA"/>
</dbReference>
<dbReference type="SMR" id="Q9HDY4"/>
<dbReference type="BioGRID" id="279793">
    <property type="interactions" value="4"/>
</dbReference>
<dbReference type="FunCoup" id="Q9HDY4">
    <property type="interactions" value="896"/>
</dbReference>
<dbReference type="STRING" id="284812.Q9HDY4"/>
<dbReference type="iPTMnet" id="Q9HDY4"/>
<dbReference type="PaxDb" id="4896-SPAPB1A10.06c.1"/>
<dbReference type="EnsemblFungi" id="SPAPB1A10.06c.1">
    <property type="protein sequence ID" value="SPAPB1A10.06c.1:pep"/>
    <property type="gene ID" value="SPAPB1A10.06c"/>
</dbReference>
<dbReference type="KEGG" id="spo:2543371"/>
<dbReference type="PomBase" id="SPAPB1A10.06c"/>
<dbReference type="VEuPathDB" id="FungiDB:SPAPB1A10.06c"/>
<dbReference type="eggNOG" id="KOG0926">
    <property type="taxonomic scope" value="Eukaryota"/>
</dbReference>
<dbReference type="HOGENOM" id="CLU_001832_0_3_1"/>
<dbReference type="InParanoid" id="Q9HDY4"/>
<dbReference type="OMA" id="FCYLDDK"/>
<dbReference type="PhylomeDB" id="Q9HDY4"/>
<dbReference type="Reactome" id="R-SPO-6791226">
    <property type="pathway name" value="Major pathway of rRNA processing in the nucleolus and cytosol"/>
</dbReference>
<dbReference type="PRO" id="PR:Q9HDY4"/>
<dbReference type="Proteomes" id="UP000002485">
    <property type="component" value="Chromosome I"/>
</dbReference>
<dbReference type="GO" id="GO:0005730">
    <property type="term" value="C:nucleolus"/>
    <property type="evidence" value="ECO:0007005"/>
    <property type="project" value="PomBase"/>
</dbReference>
<dbReference type="GO" id="GO:0005634">
    <property type="term" value="C:nucleus"/>
    <property type="evidence" value="ECO:0007005"/>
    <property type="project" value="PomBase"/>
</dbReference>
<dbReference type="GO" id="GO:0032040">
    <property type="term" value="C:small-subunit processome"/>
    <property type="evidence" value="ECO:0000266"/>
    <property type="project" value="PomBase"/>
</dbReference>
<dbReference type="GO" id="GO:0005681">
    <property type="term" value="C:spliceosomal complex"/>
    <property type="evidence" value="ECO:0007669"/>
    <property type="project" value="UniProtKB-ARBA"/>
</dbReference>
<dbReference type="GO" id="GO:0005524">
    <property type="term" value="F:ATP binding"/>
    <property type="evidence" value="ECO:0000255"/>
    <property type="project" value="PomBase"/>
</dbReference>
<dbReference type="GO" id="GO:0016887">
    <property type="term" value="F:ATP hydrolysis activity"/>
    <property type="evidence" value="ECO:0007669"/>
    <property type="project" value="RHEA"/>
</dbReference>
<dbReference type="GO" id="GO:0004386">
    <property type="term" value="F:helicase activity"/>
    <property type="evidence" value="ECO:0000318"/>
    <property type="project" value="GO_Central"/>
</dbReference>
<dbReference type="GO" id="GO:0003723">
    <property type="term" value="F:RNA binding"/>
    <property type="evidence" value="ECO:0000318"/>
    <property type="project" value="GO_Central"/>
</dbReference>
<dbReference type="GO" id="GO:0003724">
    <property type="term" value="F:RNA helicase activity"/>
    <property type="evidence" value="ECO:0000266"/>
    <property type="project" value="PomBase"/>
</dbReference>
<dbReference type="GO" id="GO:0000462">
    <property type="term" value="P:maturation of SSU-rRNA from tricistronic rRNA transcript (SSU-rRNA, 5.8S rRNA, LSU-rRNA)"/>
    <property type="evidence" value="ECO:0000318"/>
    <property type="project" value="GO_Central"/>
</dbReference>
<dbReference type="CDD" id="cd17982">
    <property type="entry name" value="DEXHc_DHX37"/>
    <property type="match status" value="1"/>
</dbReference>
<dbReference type="CDD" id="cd18791">
    <property type="entry name" value="SF2_C_RHA"/>
    <property type="match status" value="1"/>
</dbReference>
<dbReference type="FunFam" id="3.40.50.300:FF:003770">
    <property type="entry name" value="ATP-dependent RNA helicase DHR1, putative"/>
    <property type="match status" value="1"/>
</dbReference>
<dbReference type="FunFam" id="3.40.50.300:FF:000637">
    <property type="entry name" value="ATP-dependent RNA helicase DHX37/DHR1"/>
    <property type="match status" value="1"/>
</dbReference>
<dbReference type="FunFam" id="1.20.120.1080:FF:000039">
    <property type="entry name" value="Unplaced genomic scaffold supercont1.1, whole genome shotgun sequence"/>
    <property type="match status" value="1"/>
</dbReference>
<dbReference type="Gene3D" id="1.20.120.1080">
    <property type="match status" value="1"/>
</dbReference>
<dbReference type="Gene3D" id="3.40.50.300">
    <property type="entry name" value="P-loop containing nucleotide triphosphate hydrolases"/>
    <property type="match status" value="2"/>
</dbReference>
<dbReference type="InterPro" id="IPR011709">
    <property type="entry name" value="DEAD-box_helicase_OB_fold"/>
</dbReference>
<dbReference type="InterPro" id="IPR011545">
    <property type="entry name" value="DEAD/DEAH_box_helicase_dom"/>
</dbReference>
<dbReference type="InterPro" id="IPR002464">
    <property type="entry name" value="DNA/RNA_helicase_DEAH_CS"/>
</dbReference>
<dbReference type="InterPro" id="IPR048333">
    <property type="entry name" value="HA2_WH"/>
</dbReference>
<dbReference type="InterPro" id="IPR007502">
    <property type="entry name" value="Helicase-assoc_dom"/>
</dbReference>
<dbReference type="InterPro" id="IPR014001">
    <property type="entry name" value="Helicase_ATP-bd"/>
</dbReference>
<dbReference type="InterPro" id="IPR001650">
    <property type="entry name" value="Helicase_C-like"/>
</dbReference>
<dbReference type="InterPro" id="IPR027417">
    <property type="entry name" value="P-loop_NTPase"/>
</dbReference>
<dbReference type="PANTHER" id="PTHR18934">
    <property type="entry name" value="ATP-DEPENDENT RNA HELICASE"/>
    <property type="match status" value="1"/>
</dbReference>
<dbReference type="PANTHER" id="PTHR18934:SF99">
    <property type="entry name" value="ATP-DEPENDENT RNA HELICASE DHX37-RELATED"/>
    <property type="match status" value="1"/>
</dbReference>
<dbReference type="Pfam" id="PF00270">
    <property type="entry name" value="DEAD"/>
    <property type="match status" value="1"/>
</dbReference>
<dbReference type="Pfam" id="PF21010">
    <property type="entry name" value="HA2_C"/>
    <property type="match status" value="1"/>
</dbReference>
<dbReference type="Pfam" id="PF04408">
    <property type="entry name" value="HA2_N"/>
    <property type="match status" value="1"/>
</dbReference>
<dbReference type="Pfam" id="PF00271">
    <property type="entry name" value="Helicase_C"/>
    <property type="match status" value="1"/>
</dbReference>
<dbReference type="Pfam" id="PF07717">
    <property type="entry name" value="OB_NTP_bind"/>
    <property type="match status" value="1"/>
</dbReference>
<dbReference type="SMART" id="SM00487">
    <property type="entry name" value="DEXDc"/>
    <property type="match status" value="1"/>
</dbReference>
<dbReference type="SMART" id="SM00847">
    <property type="entry name" value="HA2"/>
    <property type="match status" value="1"/>
</dbReference>
<dbReference type="SMART" id="SM00490">
    <property type="entry name" value="HELICc"/>
    <property type="match status" value="1"/>
</dbReference>
<dbReference type="SUPFAM" id="SSF52540">
    <property type="entry name" value="P-loop containing nucleoside triphosphate hydrolases"/>
    <property type="match status" value="1"/>
</dbReference>
<dbReference type="PROSITE" id="PS00690">
    <property type="entry name" value="DEAH_ATP_HELICASE"/>
    <property type="match status" value="1"/>
</dbReference>
<dbReference type="PROSITE" id="PS51192">
    <property type="entry name" value="HELICASE_ATP_BIND_1"/>
    <property type="match status" value="1"/>
</dbReference>
<dbReference type="PROSITE" id="PS51194">
    <property type="entry name" value="HELICASE_CTER"/>
    <property type="match status" value="1"/>
</dbReference>
<keyword id="KW-0067">ATP-binding</keyword>
<keyword id="KW-0347">Helicase</keyword>
<keyword id="KW-0378">Hydrolase</keyword>
<keyword id="KW-0547">Nucleotide-binding</keyword>
<keyword id="KW-0539">Nucleus</keyword>
<keyword id="KW-1185">Reference proteome</keyword>
<keyword id="KW-0694">RNA-binding</keyword>
<feature type="chain" id="PRO_0000055192" description="Putative ATP-dependent RNA helicase PB1A10.06c">
    <location>
        <begin position="1"/>
        <end position="1183"/>
    </location>
</feature>
<feature type="domain" description="Helicase ATP-binding" evidence="1">
    <location>
        <begin position="408"/>
        <end position="585"/>
    </location>
</feature>
<feature type="domain" description="Helicase C-terminal" evidence="2">
    <location>
        <begin position="611"/>
        <end position="831"/>
    </location>
</feature>
<feature type="region of interest" description="Disordered" evidence="3">
    <location>
        <begin position="1"/>
        <end position="92"/>
    </location>
</feature>
<feature type="region of interest" description="Disordered" evidence="3">
    <location>
        <begin position="165"/>
        <end position="315"/>
    </location>
</feature>
<feature type="region of interest" description="Disordered" evidence="3">
    <location>
        <begin position="673"/>
        <end position="696"/>
    </location>
</feature>
<feature type="short sequence motif" description="DEAH box">
    <location>
        <begin position="522"/>
        <end position="525"/>
    </location>
</feature>
<feature type="compositionally biased region" description="Basic and acidic residues" evidence="3">
    <location>
        <begin position="60"/>
        <end position="81"/>
    </location>
</feature>
<feature type="compositionally biased region" description="Low complexity" evidence="3">
    <location>
        <begin position="165"/>
        <end position="176"/>
    </location>
</feature>
<feature type="compositionally biased region" description="Low complexity" evidence="3">
    <location>
        <begin position="184"/>
        <end position="196"/>
    </location>
</feature>
<feature type="compositionally biased region" description="Acidic residues" evidence="3">
    <location>
        <begin position="224"/>
        <end position="251"/>
    </location>
</feature>
<feature type="compositionally biased region" description="Basic and acidic residues" evidence="3">
    <location>
        <begin position="252"/>
        <end position="270"/>
    </location>
</feature>
<feature type="compositionally biased region" description="Acidic residues" evidence="3">
    <location>
        <begin position="292"/>
        <end position="308"/>
    </location>
</feature>
<feature type="compositionally biased region" description="Acidic residues" evidence="3">
    <location>
        <begin position="673"/>
        <end position="683"/>
    </location>
</feature>
<feature type="binding site" evidence="1">
    <location>
        <begin position="421"/>
        <end position="428"/>
    </location>
    <ligand>
        <name>ATP</name>
        <dbReference type="ChEBI" id="CHEBI:30616"/>
    </ligand>
</feature>
<evidence type="ECO:0000255" key="1">
    <source>
        <dbReference type="PROSITE-ProRule" id="PRU00541"/>
    </source>
</evidence>
<evidence type="ECO:0000255" key="2">
    <source>
        <dbReference type="PROSITE-ProRule" id="PRU00542"/>
    </source>
</evidence>
<evidence type="ECO:0000256" key="3">
    <source>
        <dbReference type="SAM" id="MobiDB-lite"/>
    </source>
</evidence>
<evidence type="ECO:0000269" key="4">
    <source>
    </source>
</evidence>
<evidence type="ECO:0000305" key="5"/>
<gene>
    <name type="ORF">SPAPB1A10.06c</name>
</gene>
<protein>
    <recommendedName>
        <fullName>Putative ATP-dependent RNA helicase PB1A10.06c</fullName>
        <ecNumber>3.6.4.13</ecNumber>
    </recommendedName>
</protein>